<comment type="function">
    <text evidence="1">Peptide which can recruit, activate and subsequently lyse human neutrophils, thus eliminating the main cellular defense against infection. Stimulates the secretion of the chemotactic factor interleukin-8 (IL-8). The ensuing activation process triggers an inflammatory response in the host, thus contributing greatly to virulence. Also possesses hemolytic activity, which may contribute to the development of disease.</text>
</comment>
<comment type="induction">
    <text evidence="1">Up-regulated by agr.</text>
</comment>
<comment type="miscellaneous">
    <text>Peptide production is higher in most prevalent community-associated MRSA strains than in hospital-associated MRSA strains.</text>
</comment>
<comment type="similarity">
    <text evidence="2">Belongs to the phenol-soluble modulin alpha peptides family.</text>
</comment>
<dbReference type="EMBL" id="BA000033">
    <property type="status" value="NOT_ANNOTATED_CDS"/>
    <property type="molecule type" value="Genomic_DNA"/>
</dbReference>
<dbReference type="EMBL" id="BK006301">
    <property type="protein sequence ID" value="DAA06122.1"/>
    <property type="molecule type" value="Genomic_DNA"/>
</dbReference>
<dbReference type="PDB" id="9ATW">
    <property type="method" value="EM"/>
    <property type="resolution" value="3.50 A"/>
    <property type="chains" value="A0/A1/A2/A3/A4/A5/A6/A7/A8/A9/AU/AV/AW/AX/AY/AZ/Aa/Ab/Ac/Ad/Ae/Af/Ag/Ah/Ai/Aj/Ak/Al/Am/An=1-21"/>
</dbReference>
<dbReference type="PDBsum" id="9ATW"/>
<dbReference type="EMDB" id="EMD-43835"/>
<dbReference type="SMR" id="A9JX05"/>
<dbReference type="PHI-base" id="PHI:4599"/>
<dbReference type="GO" id="GO:0031640">
    <property type="term" value="P:killing of cells of another organism"/>
    <property type="evidence" value="ECO:0007669"/>
    <property type="project" value="UniProtKB-KW"/>
</dbReference>
<dbReference type="InterPro" id="IPR031429">
    <property type="entry name" value="PSM_alpha"/>
</dbReference>
<dbReference type="NCBIfam" id="NF033425">
    <property type="entry name" value="PSM_alpha_1_2"/>
    <property type="match status" value="1"/>
</dbReference>
<dbReference type="Pfam" id="PF17063">
    <property type="entry name" value="PSMalpha"/>
    <property type="match status" value="1"/>
</dbReference>
<protein>
    <recommendedName>
        <fullName>Phenol-soluble modulin alpha 1 peptide</fullName>
    </recommendedName>
</protein>
<name>PSMA1_STAAW</name>
<accession>A9JX05</accession>
<reference key="1">
    <citation type="journal article" date="2002" name="Lancet">
        <title>Genome and virulence determinants of high virulence community-acquired MRSA.</title>
        <authorList>
            <person name="Baba T."/>
            <person name="Takeuchi F."/>
            <person name="Kuroda M."/>
            <person name="Yuzawa H."/>
            <person name="Aoki K."/>
            <person name="Oguchi A."/>
            <person name="Nagai Y."/>
            <person name="Iwama N."/>
            <person name="Asano K."/>
            <person name="Naimi T."/>
            <person name="Kuroda H."/>
            <person name="Cui L."/>
            <person name="Yamamoto K."/>
            <person name="Hiramatsu K."/>
        </authorList>
    </citation>
    <scope>NUCLEOTIDE SEQUENCE [LARGE SCALE GENOMIC DNA]</scope>
    <source>
        <strain>MW2</strain>
    </source>
</reference>
<reference key="2">
    <citation type="journal article" date="2007" name="Nat. Med.">
        <title>Identification of novel cytolytic peptides as key virulence determinants for community-associated MRSA.</title>
        <authorList>
            <person name="Wang R."/>
            <person name="Braughton K.R."/>
            <person name="Kretschmer D."/>
            <person name="Bach T.-H.L."/>
            <person name="Queck S.Y."/>
            <person name="Li M."/>
            <person name="Kennedy A.D."/>
            <person name="Dorward D.W."/>
            <person name="Klebanoff S.J."/>
            <person name="Peschel A."/>
            <person name="DeLeo F.R."/>
            <person name="Otto M."/>
        </authorList>
    </citation>
    <scope>PARTIAL PROTEIN SEQUENCE</scope>
    <scope>FORMYLATION AT MET-1</scope>
    <scope>FUNCTION AS A VIRULENCE FACTOR</scope>
    <scope>IDENTIFICATION BY MASS SPECTROMETRY</scope>
    <scope>INDUCTION BY AGR</scope>
</reference>
<sequence length="21" mass="2260">MGIIAGIIKVIKSLIEQFTGK</sequence>
<gene>
    <name type="primary">psmA1</name>
    <name type="ordered locus">MW0406.4</name>
</gene>
<evidence type="ECO:0000269" key="1">
    <source>
    </source>
</evidence>
<evidence type="ECO:0000305" key="2"/>
<feature type="peptide" id="PRO_0000345042" description="Phenol-soluble modulin alpha 1 peptide">
    <location>
        <begin position="1"/>
        <end position="21"/>
    </location>
</feature>
<feature type="modified residue" description="N-formylmethionine" evidence="1">
    <location>
        <position position="1"/>
    </location>
</feature>
<proteinExistence type="evidence at protein level"/>
<organism>
    <name type="scientific">Staphylococcus aureus (strain MW2)</name>
    <dbReference type="NCBI Taxonomy" id="196620"/>
    <lineage>
        <taxon>Bacteria</taxon>
        <taxon>Bacillati</taxon>
        <taxon>Bacillota</taxon>
        <taxon>Bacilli</taxon>
        <taxon>Bacillales</taxon>
        <taxon>Staphylococcaceae</taxon>
        <taxon>Staphylococcus</taxon>
    </lineage>
</organism>
<keyword id="KW-0002">3D-structure</keyword>
<keyword id="KW-0204">Cytolysis</keyword>
<keyword id="KW-0903">Direct protein sequencing</keyword>
<keyword id="KW-0291">Formylation</keyword>
<keyword id="KW-0843">Virulence</keyword>